<feature type="chain" id="PRO_0000313109" description="DNA ligase">
    <location>
        <begin position="1"/>
        <end position="677"/>
    </location>
</feature>
<feature type="domain" description="BRCT" evidence="1">
    <location>
        <begin position="599"/>
        <end position="677"/>
    </location>
</feature>
<feature type="active site" description="N6-AMP-lysine intermediate" evidence="1">
    <location>
        <position position="117"/>
    </location>
</feature>
<feature type="binding site" evidence="1">
    <location>
        <begin position="35"/>
        <end position="39"/>
    </location>
    <ligand>
        <name>NAD(+)</name>
        <dbReference type="ChEBI" id="CHEBI:57540"/>
    </ligand>
</feature>
<feature type="binding site" evidence="1">
    <location>
        <begin position="84"/>
        <end position="85"/>
    </location>
    <ligand>
        <name>NAD(+)</name>
        <dbReference type="ChEBI" id="CHEBI:57540"/>
    </ligand>
</feature>
<feature type="binding site" evidence="1">
    <location>
        <position position="115"/>
    </location>
    <ligand>
        <name>NAD(+)</name>
        <dbReference type="ChEBI" id="CHEBI:57540"/>
    </ligand>
</feature>
<feature type="binding site" evidence="1">
    <location>
        <position position="138"/>
    </location>
    <ligand>
        <name>NAD(+)</name>
        <dbReference type="ChEBI" id="CHEBI:57540"/>
    </ligand>
</feature>
<feature type="binding site" evidence="1">
    <location>
        <position position="177"/>
    </location>
    <ligand>
        <name>NAD(+)</name>
        <dbReference type="ChEBI" id="CHEBI:57540"/>
    </ligand>
</feature>
<feature type="binding site" evidence="1">
    <location>
        <position position="296"/>
    </location>
    <ligand>
        <name>NAD(+)</name>
        <dbReference type="ChEBI" id="CHEBI:57540"/>
    </ligand>
</feature>
<feature type="binding site" evidence="1">
    <location>
        <position position="320"/>
    </location>
    <ligand>
        <name>NAD(+)</name>
        <dbReference type="ChEBI" id="CHEBI:57540"/>
    </ligand>
</feature>
<feature type="binding site" evidence="1">
    <location>
        <position position="414"/>
    </location>
    <ligand>
        <name>Zn(2+)</name>
        <dbReference type="ChEBI" id="CHEBI:29105"/>
    </ligand>
</feature>
<feature type="binding site" evidence="1">
    <location>
        <position position="417"/>
    </location>
    <ligand>
        <name>Zn(2+)</name>
        <dbReference type="ChEBI" id="CHEBI:29105"/>
    </ligand>
</feature>
<feature type="binding site" evidence="1">
    <location>
        <position position="432"/>
    </location>
    <ligand>
        <name>Zn(2+)</name>
        <dbReference type="ChEBI" id="CHEBI:29105"/>
    </ligand>
</feature>
<feature type="binding site" evidence="1">
    <location>
        <position position="437"/>
    </location>
    <ligand>
        <name>Zn(2+)</name>
        <dbReference type="ChEBI" id="CHEBI:29105"/>
    </ligand>
</feature>
<proteinExistence type="inferred from homology"/>
<name>DNLJ_NOSS1</name>
<sequence>MIQTHSEVKRVEELRRLLQQASYAYYVSDAPIMEDAVYDQLYRELQQLEIQHPELVTPDSPTQRIGERPATQFLSVRHNIPLYSLENAFNVEELQAWDQRWRRQVAPTEAEYVAELKIDGSAIALTYQNGILVRGATRGDGVTGEDITQNVRTIRSIPLRLNFDGIEKVEKVEVRGEAFLPLEVFKQINEERQKAGEQLFANPRNAAAGTLRQLDSRIVARRRLDFFAYTLHISGMDDASIANTQWEALELLQKMGFRVNPNHKLCQSLAEVADYYKYWDTERLNLPYMTDGVVLKLNSFKLQEQLGFTQRFPRWAVALKYPAEEAPTRVENIAVNVGRTGALTPLAQMRPVQLAGTTVSRATLHNSDRIAQLDIRIGDTVIVRKAGEIIPEVVRVIKELRPADTQPFIMPTHCPVCGQPVVRETGEAVTRCVNASCPAILKGSIEHWVSRDALDIKGVGEKLVYQLVDKGLVHSVADLYDLTTERLFALERMGEKSAQKLIEAIAQSKNQPWSRVLYGLGIRHVGSVNAQLLSEKYRAVAELSSAKQSDIEGIYGIGAEIAQSVYQWFRINANQSLIERLQAAGLKLANTEEIPVMNNGILKLNGKTFVVTGTLPTLKRDEVKALIQKAGGKVTDSVSKKTDYLVVGEDAGSKLEKAQALGIAQLTETQLLEILEE</sequence>
<protein>
    <recommendedName>
        <fullName evidence="1">DNA ligase</fullName>
        <ecNumber evidence="1">6.5.1.2</ecNumber>
    </recommendedName>
    <alternativeName>
        <fullName evidence="1">Polydeoxyribonucleotide synthase [NAD(+)]</fullName>
    </alternativeName>
</protein>
<gene>
    <name evidence="1" type="primary">ligA</name>
    <name type="ordered locus">all1717</name>
</gene>
<keyword id="KW-0227">DNA damage</keyword>
<keyword id="KW-0234">DNA repair</keyword>
<keyword id="KW-0235">DNA replication</keyword>
<keyword id="KW-0436">Ligase</keyword>
<keyword id="KW-0460">Magnesium</keyword>
<keyword id="KW-0464">Manganese</keyword>
<keyword id="KW-0479">Metal-binding</keyword>
<keyword id="KW-0520">NAD</keyword>
<keyword id="KW-1185">Reference proteome</keyword>
<keyword id="KW-0862">Zinc</keyword>
<dbReference type="EC" id="6.5.1.2" evidence="1"/>
<dbReference type="EMBL" id="BA000019">
    <property type="protein sequence ID" value="BAB78083.1"/>
    <property type="molecule type" value="Genomic_DNA"/>
</dbReference>
<dbReference type="PIR" id="AG2020">
    <property type="entry name" value="AG2020"/>
</dbReference>
<dbReference type="RefSeq" id="WP_010995886.1">
    <property type="nucleotide sequence ID" value="NZ_RSCN01000013.1"/>
</dbReference>
<dbReference type="SMR" id="Q8YW98"/>
<dbReference type="STRING" id="103690.gene:10493735"/>
<dbReference type="KEGG" id="ana:all1717"/>
<dbReference type="eggNOG" id="COG0272">
    <property type="taxonomic scope" value="Bacteria"/>
</dbReference>
<dbReference type="OrthoDB" id="9759736at2"/>
<dbReference type="Proteomes" id="UP000002483">
    <property type="component" value="Chromosome"/>
</dbReference>
<dbReference type="GO" id="GO:0005829">
    <property type="term" value="C:cytosol"/>
    <property type="evidence" value="ECO:0007669"/>
    <property type="project" value="TreeGrafter"/>
</dbReference>
<dbReference type="GO" id="GO:0003677">
    <property type="term" value="F:DNA binding"/>
    <property type="evidence" value="ECO:0007669"/>
    <property type="project" value="InterPro"/>
</dbReference>
<dbReference type="GO" id="GO:0003911">
    <property type="term" value="F:DNA ligase (NAD+) activity"/>
    <property type="evidence" value="ECO:0007669"/>
    <property type="project" value="UniProtKB-UniRule"/>
</dbReference>
<dbReference type="GO" id="GO:0046872">
    <property type="term" value="F:metal ion binding"/>
    <property type="evidence" value="ECO:0007669"/>
    <property type="project" value="UniProtKB-KW"/>
</dbReference>
<dbReference type="GO" id="GO:0006281">
    <property type="term" value="P:DNA repair"/>
    <property type="evidence" value="ECO:0007669"/>
    <property type="project" value="UniProtKB-KW"/>
</dbReference>
<dbReference type="GO" id="GO:0006260">
    <property type="term" value="P:DNA replication"/>
    <property type="evidence" value="ECO:0007669"/>
    <property type="project" value="UniProtKB-KW"/>
</dbReference>
<dbReference type="CDD" id="cd00114">
    <property type="entry name" value="LIGANc"/>
    <property type="match status" value="1"/>
</dbReference>
<dbReference type="FunFam" id="1.10.150.20:FF:000007">
    <property type="entry name" value="DNA ligase"/>
    <property type="match status" value="1"/>
</dbReference>
<dbReference type="FunFam" id="1.10.287.610:FF:000002">
    <property type="entry name" value="DNA ligase"/>
    <property type="match status" value="1"/>
</dbReference>
<dbReference type="FunFam" id="2.40.50.140:FF:000012">
    <property type="entry name" value="DNA ligase"/>
    <property type="match status" value="1"/>
</dbReference>
<dbReference type="FunFam" id="3.30.470.30:FF:000001">
    <property type="entry name" value="DNA ligase"/>
    <property type="match status" value="1"/>
</dbReference>
<dbReference type="Gene3D" id="6.20.10.30">
    <property type="match status" value="1"/>
</dbReference>
<dbReference type="Gene3D" id="1.10.150.20">
    <property type="entry name" value="5' to 3' exonuclease, C-terminal subdomain"/>
    <property type="match status" value="2"/>
</dbReference>
<dbReference type="Gene3D" id="3.40.50.10190">
    <property type="entry name" value="BRCT domain"/>
    <property type="match status" value="1"/>
</dbReference>
<dbReference type="Gene3D" id="3.30.470.30">
    <property type="entry name" value="DNA ligase/mRNA capping enzyme"/>
    <property type="match status" value="1"/>
</dbReference>
<dbReference type="Gene3D" id="1.10.287.610">
    <property type="entry name" value="Helix hairpin bin"/>
    <property type="match status" value="1"/>
</dbReference>
<dbReference type="Gene3D" id="2.40.50.140">
    <property type="entry name" value="Nucleic acid-binding proteins"/>
    <property type="match status" value="1"/>
</dbReference>
<dbReference type="HAMAP" id="MF_01588">
    <property type="entry name" value="DNA_ligase_A"/>
    <property type="match status" value="1"/>
</dbReference>
<dbReference type="InterPro" id="IPR001357">
    <property type="entry name" value="BRCT_dom"/>
</dbReference>
<dbReference type="InterPro" id="IPR036420">
    <property type="entry name" value="BRCT_dom_sf"/>
</dbReference>
<dbReference type="InterPro" id="IPR041663">
    <property type="entry name" value="DisA/LigA_HHH"/>
</dbReference>
<dbReference type="InterPro" id="IPR001679">
    <property type="entry name" value="DNA_ligase"/>
</dbReference>
<dbReference type="InterPro" id="IPR018239">
    <property type="entry name" value="DNA_ligase_AS"/>
</dbReference>
<dbReference type="InterPro" id="IPR033136">
    <property type="entry name" value="DNA_ligase_CS"/>
</dbReference>
<dbReference type="InterPro" id="IPR013839">
    <property type="entry name" value="DNAligase_adenylation"/>
</dbReference>
<dbReference type="InterPro" id="IPR013840">
    <property type="entry name" value="DNAligase_N"/>
</dbReference>
<dbReference type="InterPro" id="IPR003583">
    <property type="entry name" value="Hlx-hairpin-Hlx_DNA-bd_motif"/>
</dbReference>
<dbReference type="InterPro" id="IPR012340">
    <property type="entry name" value="NA-bd_OB-fold"/>
</dbReference>
<dbReference type="InterPro" id="IPR004150">
    <property type="entry name" value="NAD_DNA_ligase_OB"/>
</dbReference>
<dbReference type="InterPro" id="IPR010994">
    <property type="entry name" value="RuvA_2-like"/>
</dbReference>
<dbReference type="InterPro" id="IPR004149">
    <property type="entry name" value="Znf_DNAligase_C4"/>
</dbReference>
<dbReference type="NCBIfam" id="TIGR00575">
    <property type="entry name" value="dnlj"/>
    <property type="match status" value="1"/>
</dbReference>
<dbReference type="NCBIfam" id="NF005932">
    <property type="entry name" value="PRK07956.1"/>
    <property type="match status" value="1"/>
</dbReference>
<dbReference type="PANTHER" id="PTHR23389">
    <property type="entry name" value="CHROMOSOME TRANSMISSION FIDELITY FACTOR 18"/>
    <property type="match status" value="1"/>
</dbReference>
<dbReference type="PANTHER" id="PTHR23389:SF9">
    <property type="entry name" value="DNA LIGASE"/>
    <property type="match status" value="1"/>
</dbReference>
<dbReference type="Pfam" id="PF00533">
    <property type="entry name" value="BRCT"/>
    <property type="match status" value="1"/>
</dbReference>
<dbReference type="Pfam" id="PF01653">
    <property type="entry name" value="DNA_ligase_aden"/>
    <property type="match status" value="1"/>
</dbReference>
<dbReference type="Pfam" id="PF03120">
    <property type="entry name" value="DNA_ligase_OB"/>
    <property type="match status" value="1"/>
</dbReference>
<dbReference type="Pfam" id="PF03119">
    <property type="entry name" value="DNA_ligase_ZBD"/>
    <property type="match status" value="1"/>
</dbReference>
<dbReference type="Pfam" id="PF12826">
    <property type="entry name" value="HHH_2"/>
    <property type="match status" value="1"/>
</dbReference>
<dbReference type="Pfam" id="PF14520">
    <property type="entry name" value="HHH_5"/>
    <property type="match status" value="1"/>
</dbReference>
<dbReference type="Pfam" id="PF22745">
    <property type="entry name" value="Nlig-Ia"/>
    <property type="match status" value="1"/>
</dbReference>
<dbReference type="PIRSF" id="PIRSF001604">
    <property type="entry name" value="LigA"/>
    <property type="match status" value="1"/>
</dbReference>
<dbReference type="SMART" id="SM00292">
    <property type="entry name" value="BRCT"/>
    <property type="match status" value="1"/>
</dbReference>
<dbReference type="SMART" id="SM00278">
    <property type="entry name" value="HhH1"/>
    <property type="match status" value="3"/>
</dbReference>
<dbReference type="SMART" id="SM00532">
    <property type="entry name" value="LIGANc"/>
    <property type="match status" value="1"/>
</dbReference>
<dbReference type="SUPFAM" id="SSF52113">
    <property type="entry name" value="BRCT domain"/>
    <property type="match status" value="1"/>
</dbReference>
<dbReference type="SUPFAM" id="SSF56091">
    <property type="entry name" value="DNA ligase/mRNA capping enzyme, catalytic domain"/>
    <property type="match status" value="1"/>
</dbReference>
<dbReference type="SUPFAM" id="SSF50249">
    <property type="entry name" value="Nucleic acid-binding proteins"/>
    <property type="match status" value="1"/>
</dbReference>
<dbReference type="SUPFAM" id="SSF47781">
    <property type="entry name" value="RuvA domain 2-like"/>
    <property type="match status" value="1"/>
</dbReference>
<dbReference type="PROSITE" id="PS50172">
    <property type="entry name" value="BRCT"/>
    <property type="match status" value="1"/>
</dbReference>
<dbReference type="PROSITE" id="PS01055">
    <property type="entry name" value="DNA_LIGASE_N1"/>
    <property type="match status" value="1"/>
</dbReference>
<dbReference type="PROSITE" id="PS01056">
    <property type="entry name" value="DNA_LIGASE_N2"/>
    <property type="match status" value="1"/>
</dbReference>
<organism>
    <name type="scientific">Nostoc sp. (strain PCC 7120 / SAG 25.82 / UTEX 2576)</name>
    <dbReference type="NCBI Taxonomy" id="103690"/>
    <lineage>
        <taxon>Bacteria</taxon>
        <taxon>Bacillati</taxon>
        <taxon>Cyanobacteriota</taxon>
        <taxon>Cyanophyceae</taxon>
        <taxon>Nostocales</taxon>
        <taxon>Nostocaceae</taxon>
        <taxon>Nostoc</taxon>
    </lineage>
</organism>
<accession>Q8YW98</accession>
<reference key="1">
    <citation type="journal article" date="2001" name="DNA Res.">
        <title>Complete genomic sequence of the filamentous nitrogen-fixing cyanobacterium Anabaena sp. strain PCC 7120.</title>
        <authorList>
            <person name="Kaneko T."/>
            <person name="Nakamura Y."/>
            <person name="Wolk C.P."/>
            <person name="Kuritz T."/>
            <person name="Sasamoto S."/>
            <person name="Watanabe A."/>
            <person name="Iriguchi M."/>
            <person name="Ishikawa A."/>
            <person name="Kawashima K."/>
            <person name="Kimura T."/>
            <person name="Kishida Y."/>
            <person name="Kohara M."/>
            <person name="Matsumoto M."/>
            <person name="Matsuno A."/>
            <person name="Muraki A."/>
            <person name="Nakazaki N."/>
            <person name="Shimpo S."/>
            <person name="Sugimoto M."/>
            <person name="Takazawa M."/>
            <person name="Yamada M."/>
            <person name="Yasuda M."/>
            <person name="Tabata S."/>
        </authorList>
    </citation>
    <scope>NUCLEOTIDE SEQUENCE [LARGE SCALE GENOMIC DNA]</scope>
    <source>
        <strain>PCC 7120 / SAG 25.82 / UTEX 2576</strain>
    </source>
</reference>
<evidence type="ECO:0000255" key="1">
    <source>
        <dbReference type="HAMAP-Rule" id="MF_01588"/>
    </source>
</evidence>
<comment type="function">
    <text evidence="1">DNA ligase that catalyzes the formation of phosphodiester linkages between 5'-phosphoryl and 3'-hydroxyl groups in double-stranded DNA using NAD as a coenzyme and as the energy source for the reaction. It is essential for DNA replication and repair of damaged DNA.</text>
</comment>
<comment type="catalytic activity">
    <reaction evidence="1">
        <text>NAD(+) + (deoxyribonucleotide)n-3'-hydroxyl + 5'-phospho-(deoxyribonucleotide)m = (deoxyribonucleotide)n+m + AMP + beta-nicotinamide D-nucleotide.</text>
        <dbReference type="EC" id="6.5.1.2"/>
    </reaction>
</comment>
<comment type="cofactor">
    <cofactor evidence="1">
        <name>Mg(2+)</name>
        <dbReference type="ChEBI" id="CHEBI:18420"/>
    </cofactor>
    <cofactor evidence="1">
        <name>Mn(2+)</name>
        <dbReference type="ChEBI" id="CHEBI:29035"/>
    </cofactor>
</comment>
<comment type="similarity">
    <text evidence="1">Belongs to the NAD-dependent DNA ligase family. LigA subfamily.</text>
</comment>